<protein>
    <recommendedName>
        <fullName>CD82 antigen</fullName>
    </recommendedName>
    <alternativeName>
        <fullName>Metastasis suppressor Kangai-1 homolog</fullName>
    </alternativeName>
    <cdAntigenName>CD82</cdAntigenName>
</protein>
<gene>
    <name type="primary">Cd82</name>
    <name type="synonym">Kai1</name>
</gene>
<dbReference type="EMBL" id="AF049882">
    <property type="protein sequence ID" value="AAC05159.1"/>
    <property type="molecule type" value="mRNA"/>
</dbReference>
<dbReference type="SMR" id="O70352"/>
<dbReference type="FunCoup" id="O70352">
    <property type="interactions" value="359"/>
</dbReference>
<dbReference type="STRING" id="10116.ENSRNOP00000000052"/>
<dbReference type="GlyCosmos" id="O70352">
    <property type="glycosylation" value="5 sites, 4 glycans"/>
</dbReference>
<dbReference type="GlyGen" id="O70352">
    <property type="glycosylation" value="5 sites, 4 N-linked glycans (1 site)"/>
</dbReference>
<dbReference type="iPTMnet" id="O70352"/>
<dbReference type="PhosphoSitePlus" id="O70352"/>
<dbReference type="SwissPalm" id="O70352"/>
<dbReference type="PaxDb" id="10116-ENSRNOP00000000052"/>
<dbReference type="UCSC" id="RGD:69070">
    <property type="organism name" value="rat"/>
</dbReference>
<dbReference type="AGR" id="RGD:69070"/>
<dbReference type="RGD" id="69070">
    <property type="gene designation" value="Cd82"/>
</dbReference>
<dbReference type="eggNOG" id="KOG3882">
    <property type="taxonomic scope" value="Eukaryota"/>
</dbReference>
<dbReference type="InParanoid" id="O70352"/>
<dbReference type="PhylomeDB" id="O70352"/>
<dbReference type="PRO" id="PR:O70352"/>
<dbReference type="Proteomes" id="UP000002494">
    <property type="component" value="Unplaced"/>
</dbReference>
<dbReference type="GO" id="GO:0005886">
    <property type="term" value="C:plasma membrane"/>
    <property type="evidence" value="ECO:0000266"/>
    <property type="project" value="RGD"/>
</dbReference>
<dbReference type="CDD" id="cd03160">
    <property type="entry name" value="CD37_CD82_like_LEL"/>
    <property type="match status" value="1"/>
</dbReference>
<dbReference type="FunFam" id="1.10.1450.10:FF:000021">
    <property type="entry name" value="Tetraspanin"/>
    <property type="match status" value="1"/>
</dbReference>
<dbReference type="Gene3D" id="1.10.1450.10">
    <property type="entry name" value="Tetraspanin"/>
    <property type="match status" value="1"/>
</dbReference>
<dbReference type="InterPro" id="IPR018499">
    <property type="entry name" value="Tetraspanin/Peripherin"/>
</dbReference>
<dbReference type="InterPro" id="IPR000301">
    <property type="entry name" value="Tetraspanin_animals"/>
</dbReference>
<dbReference type="InterPro" id="IPR018503">
    <property type="entry name" value="Tetraspanin_CS"/>
</dbReference>
<dbReference type="InterPro" id="IPR008952">
    <property type="entry name" value="Tetraspanin_EC2_sf"/>
</dbReference>
<dbReference type="PANTHER" id="PTHR19282:SF44">
    <property type="entry name" value="CD82 ANTIGEN"/>
    <property type="match status" value="1"/>
</dbReference>
<dbReference type="PANTHER" id="PTHR19282">
    <property type="entry name" value="TETRASPANIN"/>
    <property type="match status" value="1"/>
</dbReference>
<dbReference type="Pfam" id="PF00335">
    <property type="entry name" value="Tetraspanin"/>
    <property type="match status" value="1"/>
</dbReference>
<dbReference type="PIRSF" id="PIRSF002419">
    <property type="entry name" value="Tetraspanin"/>
    <property type="match status" value="1"/>
</dbReference>
<dbReference type="PRINTS" id="PR00259">
    <property type="entry name" value="TMFOUR"/>
</dbReference>
<dbReference type="SUPFAM" id="SSF48652">
    <property type="entry name" value="Tetraspanin"/>
    <property type="match status" value="1"/>
</dbReference>
<dbReference type="PROSITE" id="PS00421">
    <property type="entry name" value="TM4_1"/>
    <property type="match status" value="1"/>
</dbReference>
<organism>
    <name type="scientific">Rattus norvegicus</name>
    <name type="common">Rat</name>
    <dbReference type="NCBI Taxonomy" id="10116"/>
    <lineage>
        <taxon>Eukaryota</taxon>
        <taxon>Metazoa</taxon>
        <taxon>Chordata</taxon>
        <taxon>Craniata</taxon>
        <taxon>Vertebrata</taxon>
        <taxon>Euteleostomi</taxon>
        <taxon>Mammalia</taxon>
        <taxon>Eutheria</taxon>
        <taxon>Euarchontoglires</taxon>
        <taxon>Glires</taxon>
        <taxon>Rodentia</taxon>
        <taxon>Myomorpha</taxon>
        <taxon>Muroidea</taxon>
        <taxon>Muridae</taxon>
        <taxon>Murinae</taxon>
        <taxon>Rattus</taxon>
    </lineage>
</organism>
<name>CD82_RAT</name>
<reference key="1">
    <citation type="journal article" date="1998" name="Prostate">
        <title>Identification of the rat homologue of KAI1 and its expression in Dunning rat prostate cancers.</title>
        <authorList>
            <person name="Suzuki H."/>
            <person name="Dong J.T."/>
            <person name="Gao A.C."/>
            <person name="Barrett J.C."/>
            <person name="Isaacs J.T."/>
        </authorList>
    </citation>
    <scope>NUCLEOTIDE SEQUENCE [MRNA]</scope>
    <source>
        <tissue>Kidney</tissue>
    </source>
</reference>
<reference key="2">
    <citation type="submission" date="2007-09" db="UniProtKB">
        <authorList>
            <person name="Lubec G."/>
            <person name="Kang S.U."/>
            <person name="Lubec S."/>
        </authorList>
    </citation>
    <scope>PROTEIN SEQUENCE OF 137-148; 170-189 AND 254-262</scope>
    <scope>IDENTIFICATION BY MASS SPECTROMETRY</scope>
    <source>
        <strain>Sprague-Dawley</strain>
        <tissue>Brain</tissue>
    </source>
</reference>
<reference key="3">
    <citation type="journal article" date="2013" name="J. Proteome Res.">
        <title>Site-specific glycan-peptide analysis for determination of N-glycoproteome heterogeneity.</title>
        <authorList>
            <person name="Parker B.L."/>
            <person name="Thaysen-Andersen M."/>
            <person name="Solis N."/>
            <person name="Scott N.E."/>
            <person name="Larsen M.R."/>
            <person name="Graham M.E."/>
            <person name="Packer N.H."/>
            <person name="Cordwell S.J."/>
        </authorList>
    </citation>
    <scope>GLYCOSYLATION [LARGE SCALE ANALYSIS] AT ASN-157</scope>
    <scope>IDENTIFICATION BY MASS SPECTROMETRY [LARGE SCALE ANALYSIS]</scope>
    <source>
        <tissue>Brain</tissue>
    </source>
</reference>
<proteinExistence type="evidence at protein level"/>
<feature type="chain" id="PRO_0000219228" description="CD82 antigen">
    <location>
        <begin position="1"/>
        <end position="266"/>
    </location>
</feature>
<feature type="topological domain" description="Cytoplasmic" evidence="3">
    <location>
        <begin position="1"/>
        <end position="11"/>
    </location>
</feature>
<feature type="transmembrane region" description="Helical" evidence="3">
    <location>
        <begin position="12"/>
        <end position="32"/>
    </location>
</feature>
<feature type="topological domain" description="Extracellular" evidence="3">
    <location>
        <begin position="33"/>
        <end position="53"/>
    </location>
</feature>
<feature type="transmembrane region" description="Helical" evidence="3">
    <location>
        <begin position="54"/>
        <end position="72"/>
    </location>
</feature>
<feature type="topological domain" description="Cytoplasmic" evidence="3">
    <location>
        <begin position="73"/>
        <end position="83"/>
    </location>
</feature>
<feature type="transmembrane region" description="Helical" evidence="3">
    <location>
        <begin position="84"/>
        <end position="110"/>
    </location>
</feature>
<feature type="topological domain" description="Extracellular" evidence="3">
    <location>
        <begin position="111"/>
        <end position="227"/>
    </location>
</feature>
<feature type="transmembrane region" description="Helical" evidence="3">
    <location>
        <begin position="228"/>
        <end position="249"/>
    </location>
</feature>
<feature type="topological domain" description="Cytoplasmic" evidence="3">
    <location>
        <begin position="250"/>
        <end position="266"/>
    </location>
</feature>
<feature type="lipid moiety-binding region" description="S-palmitoyl cysteine" evidence="1">
    <location>
        <position position="5"/>
    </location>
</feature>
<feature type="lipid moiety-binding region" description="S-palmitoyl cysteine" evidence="1">
    <location>
        <position position="74"/>
    </location>
</feature>
<feature type="glycosylation site" description="N-linked (GlcNAc...) asparagine" evidence="3">
    <location>
        <position position="127"/>
    </location>
</feature>
<feature type="glycosylation site" description="N-linked (GlcNAc...) asparagine" evidence="3">
    <location>
        <position position="131"/>
    </location>
</feature>
<feature type="glycosylation site" description="N-linked (GlcNAc...) asparagine" evidence="5">
    <location>
        <position position="157"/>
    </location>
</feature>
<feature type="glycosylation site" description="N-linked (GlcNAc...) asparagine" evidence="3">
    <location>
        <position position="166"/>
    </location>
</feature>
<feature type="glycosylation site" description="N-linked (GlcNAc...) asparagine" evidence="3">
    <location>
        <position position="197"/>
    </location>
</feature>
<evidence type="ECO:0000250" key="1">
    <source>
        <dbReference type="UniProtKB" id="P27701"/>
    </source>
</evidence>
<evidence type="ECO:0000250" key="2">
    <source>
        <dbReference type="UniProtKB" id="P40237"/>
    </source>
</evidence>
<evidence type="ECO:0000255" key="3"/>
<evidence type="ECO:0000305" key="4"/>
<evidence type="ECO:0007744" key="5">
    <source>
    </source>
</evidence>
<sequence length="266" mass="29487">MGAGCVKVTKYFLFLFNLLFFILGAVILGFGVWILADKSSFISVLQTSSSSLQVGAYVFIGVGAITMLMGFLGCIGAVNEVRCLLGLYFVFLLLILIAQVTVEVLFYFNANKLKQEMGNTVMDIIQNYSVNASSSREEAWDYVQAQVKCCGWVSPSNWTRNPVLKNSTKTTYPCSCEKTKEEDNQLIVKKGFCESDNSTASENSPEDWPVHPEGCMEKAQAWLQENFGILLGVCAGVAVIELLGLFLSICLCRYIHSEDYSKVPKY</sequence>
<keyword id="KW-1003">Cell membrane</keyword>
<keyword id="KW-0903">Direct protein sequencing</keyword>
<keyword id="KW-0325">Glycoprotein</keyword>
<keyword id="KW-0449">Lipoprotein</keyword>
<keyword id="KW-0472">Membrane</keyword>
<keyword id="KW-0564">Palmitate</keyword>
<keyword id="KW-1185">Reference proteome</keyword>
<keyword id="KW-0812">Transmembrane</keyword>
<keyword id="KW-1133">Transmembrane helix</keyword>
<accession>O70352</accession>
<comment type="function">
    <text evidence="1 2">Structural component of specialized membrane microdomains known as tetraspanin-enriched microdomains (TERMs), which act as platforms for receptor clustering and signaling. Participates thereby in diverse biological functions such as cell signal transduction, adhesion, migration and protein trafficking. Acts as a attenuator of EGF signaling, facilitating ligand-induced endocytosis of the receptor and its subsequent desensitization. Mechanistically, modulates ligand-induced ubiquitination and trafficking of EGFR via E3 ligase CBL phosphorylation by PKC. Increases cell-matrix adhesion by regulating the membrane organization of integrin alpha4/ITA4. Modulates adhesion and suppresses cell migration through other integrins such as the alpha6/ITGA6 and beta1/ITGB1. Decreases cell-associated plasminogen activation by interfering with the interaction between urokinase-type plasminogen activator/PLAU and its receptor PLAUR (By similarity). Associates with CD4 or CD8 and delivers costimulatory signals for the TCR/CD3 pathway. Plays a role in the restrains phagocyte migration but supports macrophage activation (By similarity). Plays a role in TLR9 trafficking to acidified CpG-containing compartments by controlling interaction between TLR9 and VAMP3 and subsequent myddosome assembly (By similarity). Inhibits LPS-induced inflammatory response by preventing binding of LPS to TLR4 on the cell surface (By similarity). Plays a role in the activation of macrophages into anti-inflammatory phenotypes (By similarity). Independently of Toll-like receptor (TLR) signaling, is recruited to pathogen-containing phagosomes prior to fusion with lysosomes and participates in antigen presentation (By similarity). Also acts to control angiogenesis and switch angiogenic milieu to quiescent state by binding and sequestering VEGFA and PDGFA to inhibit the signaling they trigger via their respective cell surface receptor (By similarity).</text>
</comment>
<comment type="subunit">
    <text evidence="1 2">Forms homooligomers. Interacts directly with IGSF8. Interacts with EGFR (By similarity). Interacts with VEGFA and PDGFA (By similarity). Interacts with ITGA4. Interacts with ITGA6; this interaction reduces ITGA6 cell surface expression. Interacts with ITGB1. Interacts with TLR4; this interaction inhibits TLR4-mediated signaling pathway (By similarity). Interacts with TLR9 (By similarity). Interacts with PLAUR (By similarity).</text>
</comment>
<comment type="subcellular location">
    <subcellularLocation>
        <location evidence="1">Cell membrane</location>
        <topology evidence="3">Multi-pass membrane protein</topology>
    </subcellularLocation>
</comment>
<comment type="PTM">
    <text evidence="1">Palmitoylated. Palmitoylation contributes to oligomerization and surface expression.</text>
</comment>
<comment type="similarity">
    <text evidence="4">Belongs to the tetraspanin (TM4SF) family.</text>
</comment>